<keyword id="KW-1003">Cell membrane</keyword>
<keyword id="KW-1015">Disulfide bond</keyword>
<keyword id="KW-0297">G-protein coupled receptor</keyword>
<keyword id="KW-0325">Glycoprotein</keyword>
<keyword id="KW-0472">Membrane</keyword>
<keyword id="KW-0552">Olfaction</keyword>
<keyword id="KW-0675">Receptor</keyword>
<keyword id="KW-1185">Reference proteome</keyword>
<keyword id="KW-0716">Sensory transduction</keyword>
<keyword id="KW-0807">Transducer</keyword>
<keyword id="KW-0812">Transmembrane</keyword>
<keyword id="KW-1133">Transmembrane helix</keyword>
<dbReference type="EMBL" id="AB065805">
    <property type="protein sequence ID" value="BAC06024.1"/>
    <property type="molecule type" value="Genomic_DNA"/>
</dbReference>
<dbReference type="EMBL" id="CH471076">
    <property type="protein sequence ID" value="EAW73843.1"/>
    <property type="molecule type" value="Genomic_DNA"/>
</dbReference>
<dbReference type="EMBL" id="BC136991">
    <property type="protein sequence ID" value="AAI36992.1"/>
    <property type="molecule type" value="mRNA"/>
</dbReference>
<dbReference type="EMBL" id="AF399529">
    <property type="protein sequence ID" value="AAK95014.1"/>
    <property type="molecule type" value="Genomic_DNA"/>
</dbReference>
<dbReference type="EMBL" id="BK004308">
    <property type="protein sequence ID" value="DAA04706.1"/>
    <property type="molecule type" value="Genomic_DNA"/>
</dbReference>
<dbReference type="CCDS" id="CCDS31560.1"/>
<dbReference type="RefSeq" id="NP_001001954.1">
    <property type="nucleotide sequence ID" value="NM_001001954.2"/>
</dbReference>
<dbReference type="SMR" id="Q8NGI9"/>
<dbReference type="BioGRID" id="128609">
    <property type="interactions" value="3"/>
</dbReference>
<dbReference type="FunCoup" id="Q8NGI9">
    <property type="interactions" value="417"/>
</dbReference>
<dbReference type="IntAct" id="Q8NGI9">
    <property type="interactions" value="3"/>
</dbReference>
<dbReference type="STRING" id="9606.ENSP00000492975"/>
<dbReference type="GlyCosmos" id="Q8NGI9">
    <property type="glycosylation" value="1 site, No reported glycans"/>
</dbReference>
<dbReference type="GlyGen" id="Q8NGI9">
    <property type="glycosylation" value="1 site"/>
</dbReference>
<dbReference type="iPTMnet" id="Q8NGI9"/>
<dbReference type="PhosphoSitePlus" id="Q8NGI9"/>
<dbReference type="BioMuta" id="OR5A2"/>
<dbReference type="DMDM" id="37081361"/>
<dbReference type="PaxDb" id="9606-ENSP00000303834"/>
<dbReference type="ProteomicsDB" id="73525"/>
<dbReference type="Antibodypedia" id="58820">
    <property type="antibodies" value="51 antibodies from 17 providers"/>
</dbReference>
<dbReference type="DNASU" id="219981"/>
<dbReference type="Ensembl" id="ENST00000302040.6">
    <property type="protein sequence ID" value="ENSP00000303834.4"/>
    <property type="gene ID" value="ENSG00000172324.6"/>
</dbReference>
<dbReference type="Ensembl" id="ENST00000641361.1">
    <property type="protein sequence ID" value="ENSP00000493065.1"/>
    <property type="gene ID" value="ENSG00000172324.6"/>
</dbReference>
<dbReference type="Ensembl" id="ENST00000641673.1">
    <property type="protein sequence ID" value="ENSP00000492975.1"/>
    <property type="gene ID" value="ENSG00000172324.6"/>
</dbReference>
<dbReference type="GeneID" id="219981"/>
<dbReference type="KEGG" id="hsa:219981"/>
<dbReference type="MANE-Select" id="ENST00000302040.6">
    <property type="protein sequence ID" value="ENSP00000303834.4"/>
    <property type="RefSeq nucleotide sequence ID" value="NM_001001954.2"/>
    <property type="RefSeq protein sequence ID" value="NP_001001954.1"/>
</dbReference>
<dbReference type="UCSC" id="uc010rkt.3">
    <property type="organism name" value="human"/>
</dbReference>
<dbReference type="AGR" id="HGNC:15249"/>
<dbReference type="CTD" id="219981"/>
<dbReference type="DisGeNET" id="219981"/>
<dbReference type="GeneCards" id="OR5A2"/>
<dbReference type="HGNC" id="HGNC:15249">
    <property type="gene designation" value="OR5A2"/>
</dbReference>
<dbReference type="HPA" id="ENSG00000172324">
    <property type="expression patterns" value="Low tissue specificity"/>
</dbReference>
<dbReference type="neXtProt" id="NX_Q8NGI9"/>
<dbReference type="OpenTargets" id="ENSG00000172324"/>
<dbReference type="PharmGKB" id="PA32455"/>
<dbReference type="VEuPathDB" id="HostDB:ENSG00000172324"/>
<dbReference type="eggNOG" id="ENOG502SMFV">
    <property type="taxonomic scope" value="Eukaryota"/>
</dbReference>
<dbReference type="GeneTree" id="ENSGT01130000278279"/>
<dbReference type="HOGENOM" id="CLU_012526_8_1_1"/>
<dbReference type="InParanoid" id="Q8NGI9"/>
<dbReference type="OMA" id="VQYFVFC"/>
<dbReference type="OrthoDB" id="9442511at2759"/>
<dbReference type="PAN-GO" id="Q8NGI9">
    <property type="GO annotations" value="2 GO annotations based on evolutionary models"/>
</dbReference>
<dbReference type="PhylomeDB" id="Q8NGI9"/>
<dbReference type="TreeFam" id="TF352753"/>
<dbReference type="PathwayCommons" id="Q8NGI9"/>
<dbReference type="Reactome" id="R-HSA-9752946">
    <property type="pathway name" value="Expression and translocation of olfactory receptors"/>
</dbReference>
<dbReference type="SignaLink" id="Q8NGI9"/>
<dbReference type="BioGRID-ORCS" id="219981">
    <property type="hits" value="16 hits in 751 CRISPR screens"/>
</dbReference>
<dbReference type="GeneWiki" id="OR5A2"/>
<dbReference type="GenomeRNAi" id="219981"/>
<dbReference type="Pharos" id="Q8NGI9">
    <property type="development level" value="Tdark"/>
</dbReference>
<dbReference type="PRO" id="PR:Q8NGI9"/>
<dbReference type="Proteomes" id="UP000005640">
    <property type="component" value="Chromosome 11"/>
</dbReference>
<dbReference type="RNAct" id="Q8NGI9">
    <property type="molecule type" value="protein"/>
</dbReference>
<dbReference type="ExpressionAtlas" id="Q8NGI9">
    <property type="expression patterns" value="baseline and differential"/>
</dbReference>
<dbReference type="GO" id="GO:0005886">
    <property type="term" value="C:plasma membrane"/>
    <property type="evidence" value="ECO:0007669"/>
    <property type="project" value="UniProtKB-SubCell"/>
</dbReference>
<dbReference type="GO" id="GO:0004930">
    <property type="term" value="F:G protein-coupled receptor activity"/>
    <property type="evidence" value="ECO:0007669"/>
    <property type="project" value="UniProtKB-KW"/>
</dbReference>
<dbReference type="GO" id="GO:0005549">
    <property type="term" value="F:odorant binding"/>
    <property type="evidence" value="ECO:0000318"/>
    <property type="project" value="GO_Central"/>
</dbReference>
<dbReference type="GO" id="GO:0004984">
    <property type="term" value="F:olfactory receptor activity"/>
    <property type="evidence" value="ECO:0000318"/>
    <property type="project" value="GO_Central"/>
</dbReference>
<dbReference type="CDD" id="cd15417">
    <property type="entry name" value="7tmA_OR5A1-like"/>
    <property type="match status" value="1"/>
</dbReference>
<dbReference type="FunFam" id="1.10.1220.70:FF:000001">
    <property type="entry name" value="Olfactory receptor"/>
    <property type="match status" value="1"/>
</dbReference>
<dbReference type="FunFam" id="1.20.1070.10:FF:000003">
    <property type="entry name" value="Olfactory receptor"/>
    <property type="match status" value="1"/>
</dbReference>
<dbReference type="Gene3D" id="1.20.1070.10">
    <property type="entry name" value="Rhodopsin 7-helix transmembrane proteins"/>
    <property type="match status" value="1"/>
</dbReference>
<dbReference type="InterPro" id="IPR000276">
    <property type="entry name" value="GPCR_Rhodpsn"/>
</dbReference>
<dbReference type="InterPro" id="IPR017452">
    <property type="entry name" value="GPCR_Rhodpsn_7TM"/>
</dbReference>
<dbReference type="InterPro" id="IPR000725">
    <property type="entry name" value="Olfact_rcpt"/>
</dbReference>
<dbReference type="InterPro" id="IPR050516">
    <property type="entry name" value="Olfactory_GPCR"/>
</dbReference>
<dbReference type="PANTHER" id="PTHR26452">
    <property type="entry name" value="OLFACTORY RECEPTOR"/>
    <property type="match status" value="1"/>
</dbReference>
<dbReference type="Pfam" id="PF13853">
    <property type="entry name" value="7tm_4"/>
    <property type="match status" value="1"/>
</dbReference>
<dbReference type="PRINTS" id="PR00237">
    <property type="entry name" value="GPCRRHODOPSN"/>
</dbReference>
<dbReference type="PRINTS" id="PR00245">
    <property type="entry name" value="OLFACTORYR"/>
</dbReference>
<dbReference type="SUPFAM" id="SSF81321">
    <property type="entry name" value="Family A G protein-coupled receptor-like"/>
    <property type="match status" value="1"/>
</dbReference>
<dbReference type="PROSITE" id="PS00237">
    <property type="entry name" value="G_PROTEIN_RECEP_F1_1"/>
    <property type="match status" value="1"/>
</dbReference>
<dbReference type="PROSITE" id="PS50262">
    <property type="entry name" value="G_PROTEIN_RECEP_F1_2"/>
    <property type="match status" value="1"/>
</dbReference>
<reference key="1">
    <citation type="submission" date="2001-07" db="EMBL/GenBank/DDBJ databases">
        <title>Genome-wide discovery and analysis of human seven transmembrane helix receptor genes.</title>
        <authorList>
            <person name="Suwa M."/>
            <person name="Sato T."/>
            <person name="Okouchi I."/>
            <person name="Arita M."/>
            <person name="Futami K."/>
            <person name="Matsumoto S."/>
            <person name="Tsutsumi S."/>
            <person name="Aburatani H."/>
            <person name="Asai K."/>
            <person name="Akiyama Y."/>
        </authorList>
    </citation>
    <scope>NUCLEOTIDE SEQUENCE [GENOMIC DNA]</scope>
</reference>
<reference key="2">
    <citation type="submission" date="2005-07" db="EMBL/GenBank/DDBJ databases">
        <authorList>
            <person name="Mural R.J."/>
            <person name="Istrail S."/>
            <person name="Sutton G.G."/>
            <person name="Florea L."/>
            <person name="Halpern A.L."/>
            <person name="Mobarry C.M."/>
            <person name="Lippert R."/>
            <person name="Walenz B."/>
            <person name="Shatkay H."/>
            <person name="Dew I."/>
            <person name="Miller J.R."/>
            <person name="Flanigan M.J."/>
            <person name="Edwards N.J."/>
            <person name="Bolanos R."/>
            <person name="Fasulo D."/>
            <person name="Halldorsson B.V."/>
            <person name="Hannenhalli S."/>
            <person name="Turner R."/>
            <person name="Yooseph S."/>
            <person name="Lu F."/>
            <person name="Nusskern D.R."/>
            <person name="Shue B.C."/>
            <person name="Zheng X.H."/>
            <person name="Zhong F."/>
            <person name="Delcher A.L."/>
            <person name="Huson D.H."/>
            <person name="Kravitz S.A."/>
            <person name="Mouchard L."/>
            <person name="Reinert K."/>
            <person name="Remington K.A."/>
            <person name="Clark A.G."/>
            <person name="Waterman M.S."/>
            <person name="Eichler E.E."/>
            <person name="Adams M.D."/>
            <person name="Hunkapiller M.W."/>
            <person name="Myers E.W."/>
            <person name="Venter J.C."/>
        </authorList>
    </citation>
    <scope>NUCLEOTIDE SEQUENCE [LARGE SCALE GENOMIC DNA]</scope>
</reference>
<reference key="3">
    <citation type="journal article" date="2004" name="Genome Res.">
        <title>The status, quality, and expansion of the NIH full-length cDNA project: the Mammalian Gene Collection (MGC).</title>
        <authorList>
            <consortium name="The MGC Project Team"/>
        </authorList>
    </citation>
    <scope>NUCLEOTIDE SEQUENCE [LARGE SCALE MRNA]</scope>
    <source>
        <tissue>Testis</tissue>
    </source>
</reference>
<reference key="4">
    <citation type="journal article" date="2002" name="Genomics">
        <title>DEFOG: a practical scheme for deciphering families of genes.</title>
        <authorList>
            <person name="Fuchs T."/>
            <person name="Malecova B."/>
            <person name="Linhart C."/>
            <person name="Sharan R."/>
            <person name="Khen M."/>
            <person name="Herwig R."/>
            <person name="Shmulevich D."/>
            <person name="Elkon R."/>
            <person name="Steinfath M."/>
            <person name="O'Brien J.K."/>
            <person name="Radelof U."/>
            <person name="Lehrach H."/>
            <person name="Lancet D."/>
            <person name="Shamir R."/>
        </authorList>
    </citation>
    <scope>NUCLEOTIDE SEQUENCE [GENOMIC DNA] OF 69-285</scope>
</reference>
<reference key="5">
    <citation type="journal article" date="2004" name="Proc. Natl. Acad. Sci. U.S.A.">
        <title>The human olfactory receptor gene family.</title>
        <authorList>
            <person name="Malnic B."/>
            <person name="Godfrey P.A."/>
            <person name="Buck L.B."/>
        </authorList>
    </citation>
    <scope>IDENTIFICATION</scope>
</reference>
<reference key="6">
    <citation type="journal article" date="2004" name="Proc. Natl. Acad. Sci. U.S.A.">
        <authorList>
            <person name="Malnic B."/>
            <person name="Godfrey P.A."/>
            <person name="Buck L.B."/>
        </authorList>
    </citation>
    <scope>ERRATUM OF PUBMED:14983052</scope>
</reference>
<sequence>MAVGRNNTIVTKFILLGLSDHPQMKIFLFMLFLGLYLLTLAWNLSLIALIKMDSHLHMPMYFFLSNLSFLDICYVSSTAPKMLSDIITEQKTISFVGCATQYFVFCGMGLTECFLLAAMAYDRYAAICNPLLYTVLISHTLCLKMVVGAYVGGFLSSFIETYSVYQHDFCGPYMINHFFCDLPPVLALSCSDTFTSEVVTFIVSVVVGIVSVLVVLISYGYIVAAVVKISSATGRTKAFSTCASHLTAVTLFYGSGFFMYMRPSSSYSLNRDKVVSIFYALVIPVVNPIIYSFRNKEIKNAMRKAMERDPGISHGGPFIFMTLG</sequence>
<name>OR5A2_HUMAN</name>
<accession>Q8NGI9</accession>
<accession>B9EH21</accession>
<accession>Q6IFF4</accession>
<accession>Q96RB0</accession>
<organism>
    <name type="scientific">Homo sapiens</name>
    <name type="common">Human</name>
    <dbReference type="NCBI Taxonomy" id="9606"/>
    <lineage>
        <taxon>Eukaryota</taxon>
        <taxon>Metazoa</taxon>
        <taxon>Chordata</taxon>
        <taxon>Craniata</taxon>
        <taxon>Vertebrata</taxon>
        <taxon>Euteleostomi</taxon>
        <taxon>Mammalia</taxon>
        <taxon>Eutheria</taxon>
        <taxon>Euarchontoglires</taxon>
        <taxon>Primates</taxon>
        <taxon>Haplorrhini</taxon>
        <taxon>Catarrhini</taxon>
        <taxon>Hominidae</taxon>
        <taxon>Homo</taxon>
    </lineage>
</organism>
<gene>
    <name type="primary">OR5A2</name>
</gene>
<proteinExistence type="evidence at transcript level"/>
<evidence type="ECO:0000255" key="1"/>
<evidence type="ECO:0000255" key="2">
    <source>
        <dbReference type="PROSITE-ProRule" id="PRU00521"/>
    </source>
</evidence>
<evidence type="ECO:0000305" key="3"/>
<feature type="chain" id="PRO_0000150573" description="Olfactory receptor 5A2">
    <location>
        <begin position="1"/>
        <end position="324"/>
    </location>
</feature>
<feature type="topological domain" description="Extracellular" evidence="1">
    <location>
        <begin position="1"/>
        <end position="26"/>
    </location>
</feature>
<feature type="transmembrane region" description="Helical; Name=1" evidence="1">
    <location>
        <begin position="27"/>
        <end position="47"/>
    </location>
</feature>
<feature type="topological domain" description="Cytoplasmic" evidence="1">
    <location>
        <begin position="48"/>
        <end position="55"/>
    </location>
</feature>
<feature type="transmembrane region" description="Helical; Name=2" evidence="1">
    <location>
        <begin position="56"/>
        <end position="76"/>
    </location>
</feature>
<feature type="topological domain" description="Extracellular" evidence="1">
    <location>
        <begin position="77"/>
        <end position="100"/>
    </location>
</feature>
<feature type="transmembrane region" description="Helical; Name=3" evidence="1">
    <location>
        <begin position="101"/>
        <end position="121"/>
    </location>
</feature>
<feature type="topological domain" description="Cytoplasmic" evidence="1">
    <location>
        <begin position="122"/>
        <end position="134"/>
    </location>
</feature>
<feature type="transmembrane region" description="Helical; Name=4" evidence="1">
    <location>
        <begin position="135"/>
        <end position="155"/>
    </location>
</feature>
<feature type="topological domain" description="Extracellular" evidence="1">
    <location>
        <begin position="156"/>
        <end position="197"/>
    </location>
</feature>
<feature type="transmembrane region" description="Helical; Name=5" evidence="1">
    <location>
        <begin position="198"/>
        <end position="218"/>
    </location>
</feature>
<feature type="topological domain" description="Cytoplasmic" evidence="1">
    <location>
        <begin position="219"/>
        <end position="238"/>
    </location>
</feature>
<feature type="transmembrane region" description="Helical; Name=6" evidence="1">
    <location>
        <begin position="239"/>
        <end position="259"/>
    </location>
</feature>
<feature type="topological domain" description="Extracellular" evidence="1">
    <location>
        <begin position="260"/>
        <end position="272"/>
    </location>
</feature>
<feature type="transmembrane region" description="Helical; Name=7" evidence="1">
    <location>
        <begin position="273"/>
        <end position="293"/>
    </location>
</feature>
<feature type="topological domain" description="Cytoplasmic" evidence="1">
    <location>
        <begin position="294"/>
        <end position="324"/>
    </location>
</feature>
<feature type="glycosylation site" description="N-linked (GlcNAc...) asparagine" evidence="1">
    <location>
        <position position="6"/>
    </location>
</feature>
<feature type="disulfide bond" evidence="2">
    <location>
        <begin position="98"/>
        <end position="190"/>
    </location>
</feature>
<feature type="sequence variant" id="VAR_048045" description="In dbSNP:rs17153691.">
    <original>F</original>
    <variation>L</variation>
    <location>
        <position position="103"/>
    </location>
</feature>
<feature type="sequence variant" id="VAR_024097" description="In dbSNP:rs1453547.">
    <original>P</original>
    <variation>L</variation>
    <location>
        <position position="172"/>
    </location>
</feature>
<protein>
    <recommendedName>
        <fullName>Olfactory receptor 5A2</fullName>
    </recommendedName>
    <alternativeName>
        <fullName>Olfactory receptor OR11-248</fullName>
    </alternativeName>
</protein>
<comment type="function">
    <text evidence="3">Odorant receptor.</text>
</comment>
<comment type="subcellular location">
    <subcellularLocation>
        <location>Cell membrane</location>
        <topology>Multi-pass membrane protein</topology>
    </subcellularLocation>
</comment>
<comment type="similarity">
    <text evidence="2">Belongs to the G-protein coupled receptor 1 family.</text>
</comment>
<comment type="online information" name="Human Olfactory Receptor Data Exploratorium (HORDE)">
    <link uri="http://genome.weizmann.ac.il/horde/card/index/symbol:OR5A2"/>
</comment>